<feature type="chain" id="PRO_1000205711" description="Large ribosomal subunit protein bL20">
    <location>
        <begin position="1"/>
        <end position="118"/>
    </location>
</feature>
<accession>C5B849</accession>
<keyword id="KW-0687">Ribonucleoprotein</keyword>
<keyword id="KW-0689">Ribosomal protein</keyword>
<keyword id="KW-0694">RNA-binding</keyword>
<keyword id="KW-0699">rRNA-binding</keyword>
<protein>
    <recommendedName>
        <fullName evidence="1">Large ribosomal subunit protein bL20</fullName>
    </recommendedName>
    <alternativeName>
        <fullName evidence="2">50S ribosomal protein L20</fullName>
    </alternativeName>
</protein>
<proteinExistence type="inferred from homology"/>
<reference key="1">
    <citation type="submission" date="2009-03" db="EMBL/GenBank/DDBJ databases">
        <title>Complete genome sequence of Edwardsiella ictaluri 93-146.</title>
        <authorList>
            <person name="Williams M.L."/>
            <person name="Gillaspy A.F."/>
            <person name="Dyer D.W."/>
            <person name="Thune R.L."/>
            <person name="Waldbieser G.C."/>
            <person name="Schuster S.C."/>
            <person name="Gipson J."/>
            <person name="Zaitshik J."/>
            <person name="Landry C."/>
            <person name="Lawrence M.L."/>
        </authorList>
    </citation>
    <scope>NUCLEOTIDE SEQUENCE [LARGE SCALE GENOMIC DNA]</scope>
    <source>
        <strain>93-146</strain>
    </source>
</reference>
<dbReference type="EMBL" id="CP001600">
    <property type="protein sequence ID" value="ACR69065.1"/>
    <property type="molecule type" value="Genomic_DNA"/>
</dbReference>
<dbReference type="RefSeq" id="WP_015871209.1">
    <property type="nucleotide sequence ID" value="NZ_CP169062.1"/>
</dbReference>
<dbReference type="SMR" id="C5B849"/>
<dbReference type="STRING" id="67780.B6E78_02475"/>
<dbReference type="GeneID" id="69538834"/>
<dbReference type="KEGG" id="eic:NT01EI_1889"/>
<dbReference type="PATRIC" id="fig|634503.3.peg.1692"/>
<dbReference type="HOGENOM" id="CLU_123265_0_1_6"/>
<dbReference type="OrthoDB" id="9808966at2"/>
<dbReference type="Proteomes" id="UP000001485">
    <property type="component" value="Chromosome"/>
</dbReference>
<dbReference type="GO" id="GO:1990904">
    <property type="term" value="C:ribonucleoprotein complex"/>
    <property type="evidence" value="ECO:0007669"/>
    <property type="project" value="UniProtKB-KW"/>
</dbReference>
<dbReference type="GO" id="GO:0005840">
    <property type="term" value="C:ribosome"/>
    <property type="evidence" value="ECO:0007669"/>
    <property type="project" value="UniProtKB-KW"/>
</dbReference>
<dbReference type="GO" id="GO:0019843">
    <property type="term" value="F:rRNA binding"/>
    <property type="evidence" value="ECO:0007669"/>
    <property type="project" value="UniProtKB-UniRule"/>
</dbReference>
<dbReference type="GO" id="GO:0003735">
    <property type="term" value="F:structural constituent of ribosome"/>
    <property type="evidence" value="ECO:0007669"/>
    <property type="project" value="InterPro"/>
</dbReference>
<dbReference type="GO" id="GO:0000027">
    <property type="term" value="P:ribosomal large subunit assembly"/>
    <property type="evidence" value="ECO:0007669"/>
    <property type="project" value="UniProtKB-UniRule"/>
</dbReference>
<dbReference type="GO" id="GO:0006412">
    <property type="term" value="P:translation"/>
    <property type="evidence" value="ECO:0007669"/>
    <property type="project" value="InterPro"/>
</dbReference>
<dbReference type="CDD" id="cd07026">
    <property type="entry name" value="Ribosomal_L20"/>
    <property type="match status" value="1"/>
</dbReference>
<dbReference type="FunFam" id="1.10.1900.20:FF:000001">
    <property type="entry name" value="50S ribosomal protein L20"/>
    <property type="match status" value="1"/>
</dbReference>
<dbReference type="Gene3D" id="6.10.160.10">
    <property type="match status" value="1"/>
</dbReference>
<dbReference type="Gene3D" id="1.10.1900.20">
    <property type="entry name" value="Ribosomal protein L20"/>
    <property type="match status" value="1"/>
</dbReference>
<dbReference type="HAMAP" id="MF_00382">
    <property type="entry name" value="Ribosomal_bL20"/>
    <property type="match status" value="1"/>
</dbReference>
<dbReference type="InterPro" id="IPR005813">
    <property type="entry name" value="Ribosomal_bL20"/>
</dbReference>
<dbReference type="InterPro" id="IPR049946">
    <property type="entry name" value="RIBOSOMAL_L20_CS"/>
</dbReference>
<dbReference type="InterPro" id="IPR035566">
    <property type="entry name" value="Ribosomal_protein_bL20_C"/>
</dbReference>
<dbReference type="NCBIfam" id="TIGR01032">
    <property type="entry name" value="rplT_bact"/>
    <property type="match status" value="1"/>
</dbReference>
<dbReference type="PANTHER" id="PTHR10986">
    <property type="entry name" value="39S RIBOSOMAL PROTEIN L20"/>
    <property type="match status" value="1"/>
</dbReference>
<dbReference type="Pfam" id="PF00453">
    <property type="entry name" value="Ribosomal_L20"/>
    <property type="match status" value="1"/>
</dbReference>
<dbReference type="PRINTS" id="PR00062">
    <property type="entry name" value="RIBOSOMALL20"/>
</dbReference>
<dbReference type="SUPFAM" id="SSF74731">
    <property type="entry name" value="Ribosomal protein L20"/>
    <property type="match status" value="1"/>
</dbReference>
<dbReference type="PROSITE" id="PS00937">
    <property type="entry name" value="RIBOSOMAL_L20"/>
    <property type="match status" value="1"/>
</dbReference>
<comment type="function">
    <text evidence="1">Binds directly to 23S ribosomal RNA and is necessary for the in vitro assembly process of the 50S ribosomal subunit. It is not involved in the protein synthesizing functions of that subunit.</text>
</comment>
<comment type="similarity">
    <text evidence="1">Belongs to the bacterial ribosomal protein bL20 family.</text>
</comment>
<name>RL20_EDWI9</name>
<sequence length="118" mass="13539">MARVKRGVIARARHKKVLKQAKGYYGARSRVYRVAFQAVIKAGQYAYRDRRQRKRQFRQLWIARINAAARQNGISYSRFINGLKKASVEIDRKILADIAVFDKVAFTALVEKAKVALA</sequence>
<evidence type="ECO:0000255" key="1">
    <source>
        <dbReference type="HAMAP-Rule" id="MF_00382"/>
    </source>
</evidence>
<evidence type="ECO:0000305" key="2"/>
<gene>
    <name evidence="1" type="primary">rplT</name>
    <name type="ordered locus">NT01EI_1889</name>
</gene>
<organism>
    <name type="scientific">Edwardsiella ictaluri (strain 93-146)</name>
    <dbReference type="NCBI Taxonomy" id="634503"/>
    <lineage>
        <taxon>Bacteria</taxon>
        <taxon>Pseudomonadati</taxon>
        <taxon>Pseudomonadota</taxon>
        <taxon>Gammaproteobacteria</taxon>
        <taxon>Enterobacterales</taxon>
        <taxon>Hafniaceae</taxon>
        <taxon>Edwardsiella</taxon>
    </lineage>
</organism>